<feature type="chain" id="PRO_1000193041" description="Phosphoribosylformylglycinamidine cyclo-ligase">
    <location>
        <begin position="1"/>
        <end position="345"/>
    </location>
</feature>
<proteinExistence type="inferred from homology"/>
<gene>
    <name evidence="1" type="primary">purM</name>
    <name type="ordered locus">SSPA0344</name>
</gene>
<organism>
    <name type="scientific">Salmonella paratyphi A (strain AKU_12601)</name>
    <dbReference type="NCBI Taxonomy" id="554290"/>
    <lineage>
        <taxon>Bacteria</taxon>
        <taxon>Pseudomonadati</taxon>
        <taxon>Pseudomonadota</taxon>
        <taxon>Gammaproteobacteria</taxon>
        <taxon>Enterobacterales</taxon>
        <taxon>Enterobacteriaceae</taxon>
        <taxon>Salmonella</taxon>
    </lineage>
</organism>
<comment type="catalytic activity">
    <reaction evidence="1">
        <text>2-formamido-N(1)-(5-O-phospho-beta-D-ribosyl)acetamidine + ATP = 5-amino-1-(5-phospho-beta-D-ribosyl)imidazole + ADP + phosphate + H(+)</text>
        <dbReference type="Rhea" id="RHEA:23032"/>
        <dbReference type="ChEBI" id="CHEBI:15378"/>
        <dbReference type="ChEBI" id="CHEBI:30616"/>
        <dbReference type="ChEBI" id="CHEBI:43474"/>
        <dbReference type="ChEBI" id="CHEBI:137981"/>
        <dbReference type="ChEBI" id="CHEBI:147287"/>
        <dbReference type="ChEBI" id="CHEBI:456216"/>
        <dbReference type="EC" id="6.3.3.1"/>
    </reaction>
</comment>
<comment type="pathway">
    <text evidence="1">Purine metabolism; IMP biosynthesis via de novo pathway; 5-amino-1-(5-phospho-D-ribosyl)imidazole from N(2)-formyl-N(1)-(5-phospho-D-ribosyl)glycinamide: step 2/2.</text>
</comment>
<comment type="subcellular location">
    <subcellularLocation>
        <location evidence="1">Cytoplasm</location>
    </subcellularLocation>
</comment>
<comment type="similarity">
    <text evidence="1">Belongs to the AIR synthase family.</text>
</comment>
<accession>B5BB05</accession>
<protein>
    <recommendedName>
        <fullName evidence="1">Phosphoribosylformylglycinamidine cyclo-ligase</fullName>
        <ecNumber evidence="1">6.3.3.1</ecNumber>
    </recommendedName>
    <alternativeName>
        <fullName evidence="1">AIR synthase</fullName>
    </alternativeName>
    <alternativeName>
        <fullName evidence="1">AIRS</fullName>
    </alternativeName>
    <alternativeName>
        <fullName evidence="1">Phosphoribosyl-aminoimidazole synthetase</fullName>
    </alternativeName>
</protein>
<dbReference type="EC" id="6.3.3.1" evidence="1"/>
<dbReference type="EMBL" id="FM200053">
    <property type="protein sequence ID" value="CAR58466.1"/>
    <property type="molecule type" value="Genomic_DNA"/>
</dbReference>
<dbReference type="RefSeq" id="WP_000130477.1">
    <property type="nucleotide sequence ID" value="NC_011147.1"/>
</dbReference>
<dbReference type="SMR" id="B5BB05"/>
<dbReference type="KEGG" id="sek:SSPA0344"/>
<dbReference type="HOGENOM" id="CLU_047116_0_0_6"/>
<dbReference type="UniPathway" id="UPA00074">
    <property type="reaction ID" value="UER00129"/>
</dbReference>
<dbReference type="Proteomes" id="UP000001869">
    <property type="component" value="Chromosome"/>
</dbReference>
<dbReference type="GO" id="GO:0005829">
    <property type="term" value="C:cytosol"/>
    <property type="evidence" value="ECO:0007669"/>
    <property type="project" value="TreeGrafter"/>
</dbReference>
<dbReference type="GO" id="GO:0005524">
    <property type="term" value="F:ATP binding"/>
    <property type="evidence" value="ECO:0007669"/>
    <property type="project" value="UniProtKB-KW"/>
</dbReference>
<dbReference type="GO" id="GO:0004637">
    <property type="term" value="F:phosphoribosylamine-glycine ligase activity"/>
    <property type="evidence" value="ECO:0007669"/>
    <property type="project" value="TreeGrafter"/>
</dbReference>
<dbReference type="GO" id="GO:0004641">
    <property type="term" value="F:phosphoribosylformylglycinamidine cyclo-ligase activity"/>
    <property type="evidence" value="ECO:0007669"/>
    <property type="project" value="UniProtKB-UniRule"/>
</dbReference>
<dbReference type="GO" id="GO:0006189">
    <property type="term" value="P:'de novo' IMP biosynthetic process"/>
    <property type="evidence" value="ECO:0007669"/>
    <property type="project" value="UniProtKB-UniRule"/>
</dbReference>
<dbReference type="GO" id="GO:0046084">
    <property type="term" value="P:adenine biosynthetic process"/>
    <property type="evidence" value="ECO:0007669"/>
    <property type="project" value="TreeGrafter"/>
</dbReference>
<dbReference type="CDD" id="cd02196">
    <property type="entry name" value="PurM"/>
    <property type="match status" value="1"/>
</dbReference>
<dbReference type="FunFam" id="3.30.1330.10:FF:000001">
    <property type="entry name" value="Phosphoribosylformylglycinamidine cyclo-ligase"/>
    <property type="match status" value="1"/>
</dbReference>
<dbReference type="FunFam" id="3.90.650.10:FF:000001">
    <property type="entry name" value="Phosphoribosylformylglycinamidine cyclo-ligase"/>
    <property type="match status" value="1"/>
</dbReference>
<dbReference type="Gene3D" id="3.90.650.10">
    <property type="entry name" value="PurM-like C-terminal domain"/>
    <property type="match status" value="1"/>
</dbReference>
<dbReference type="Gene3D" id="3.30.1330.10">
    <property type="entry name" value="PurM-like, N-terminal domain"/>
    <property type="match status" value="1"/>
</dbReference>
<dbReference type="HAMAP" id="MF_00741">
    <property type="entry name" value="AIRS"/>
    <property type="match status" value="1"/>
</dbReference>
<dbReference type="InterPro" id="IPR010918">
    <property type="entry name" value="PurM-like_C_dom"/>
</dbReference>
<dbReference type="InterPro" id="IPR036676">
    <property type="entry name" value="PurM-like_C_sf"/>
</dbReference>
<dbReference type="InterPro" id="IPR016188">
    <property type="entry name" value="PurM-like_N"/>
</dbReference>
<dbReference type="InterPro" id="IPR036921">
    <property type="entry name" value="PurM-like_N_sf"/>
</dbReference>
<dbReference type="InterPro" id="IPR004733">
    <property type="entry name" value="PurM_cligase"/>
</dbReference>
<dbReference type="NCBIfam" id="TIGR00878">
    <property type="entry name" value="purM"/>
    <property type="match status" value="1"/>
</dbReference>
<dbReference type="PANTHER" id="PTHR10520:SF12">
    <property type="entry name" value="TRIFUNCTIONAL PURINE BIOSYNTHETIC PROTEIN ADENOSINE-3"/>
    <property type="match status" value="1"/>
</dbReference>
<dbReference type="PANTHER" id="PTHR10520">
    <property type="entry name" value="TRIFUNCTIONAL PURINE BIOSYNTHETIC PROTEIN ADENOSINE-3-RELATED"/>
    <property type="match status" value="1"/>
</dbReference>
<dbReference type="Pfam" id="PF00586">
    <property type="entry name" value="AIRS"/>
    <property type="match status" value="1"/>
</dbReference>
<dbReference type="Pfam" id="PF02769">
    <property type="entry name" value="AIRS_C"/>
    <property type="match status" value="1"/>
</dbReference>
<dbReference type="SUPFAM" id="SSF56042">
    <property type="entry name" value="PurM C-terminal domain-like"/>
    <property type="match status" value="1"/>
</dbReference>
<dbReference type="SUPFAM" id="SSF55326">
    <property type="entry name" value="PurM N-terminal domain-like"/>
    <property type="match status" value="1"/>
</dbReference>
<name>PUR5_SALPK</name>
<sequence length="345" mass="36900">MTDKTSLSYKDAGVDIDAGNALVDRIKGVVKKTRRPEVMGGLGGFGALCALPQKYREPVLVSGTDGVGTKLRLAMDLKRHDAIGIDLVAMCVNDLVVQGAEPLFFLDYYATGKLDVDTAASVINGIAEGCLQSGCALVGGETAEMPGMYHGEDYDVAGFCVGVVEKSEIIDGSRVAEGDVLIALGSSGPHSNGYSLVRKIIDVSGCDPQTTLLEGKPLADHLLEPTRIYVKSVLELIENVDVHAIAHLTGGGFWENIPRVLPENTQAVINESSWQWPAIFTWLQTAGNVSRHEMYRTFNCGVGMVIALSAPEADKALALLNEKGENAWKIGIIKASDSEQRVVIE</sequence>
<keyword id="KW-0067">ATP-binding</keyword>
<keyword id="KW-0963">Cytoplasm</keyword>
<keyword id="KW-0436">Ligase</keyword>
<keyword id="KW-0547">Nucleotide-binding</keyword>
<keyword id="KW-0658">Purine biosynthesis</keyword>
<evidence type="ECO:0000255" key="1">
    <source>
        <dbReference type="HAMAP-Rule" id="MF_00741"/>
    </source>
</evidence>
<reference key="1">
    <citation type="journal article" date="2009" name="BMC Genomics">
        <title>Pseudogene accumulation in the evolutionary histories of Salmonella enterica serovars Paratyphi A and Typhi.</title>
        <authorList>
            <person name="Holt K.E."/>
            <person name="Thomson N.R."/>
            <person name="Wain J."/>
            <person name="Langridge G.C."/>
            <person name="Hasan R."/>
            <person name="Bhutta Z.A."/>
            <person name="Quail M.A."/>
            <person name="Norbertczak H."/>
            <person name="Walker D."/>
            <person name="Simmonds M."/>
            <person name="White B."/>
            <person name="Bason N."/>
            <person name="Mungall K."/>
            <person name="Dougan G."/>
            <person name="Parkhill J."/>
        </authorList>
    </citation>
    <scope>NUCLEOTIDE SEQUENCE [LARGE SCALE GENOMIC DNA]</scope>
    <source>
        <strain>AKU_12601</strain>
    </source>
</reference>